<organism>
    <name type="scientific">Oldenlandia affinis</name>
    <dbReference type="NCBI Taxonomy" id="60225"/>
    <lineage>
        <taxon>Eukaryota</taxon>
        <taxon>Viridiplantae</taxon>
        <taxon>Streptophyta</taxon>
        <taxon>Embryophyta</taxon>
        <taxon>Tracheophyta</taxon>
        <taxon>Spermatophyta</taxon>
        <taxon>Magnoliopsida</taxon>
        <taxon>eudicotyledons</taxon>
        <taxon>Gunneridae</taxon>
        <taxon>Pentapetalae</taxon>
        <taxon>asterids</taxon>
        <taxon>lamiids</taxon>
        <taxon>Gentianales</taxon>
        <taxon>Rubiaceae</taxon>
        <taxon>Rubioideae</taxon>
        <taxon>Spermacoceae</taxon>
        <taxon>Hedyotis-Oldenlandia complex</taxon>
        <taxon>Oldenlandia</taxon>
    </lineage>
</organism>
<sequence length="30" mass="3211">GIPCAESCVYIPCTITALLGCKCQDKVCYD</sequence>
<name>KAB16_OLDAF</name>
<keyword id="KW-0903">Direct protein sequencing</keyword>
<keyword id="KW-1015">Disulfide bond</keyword>
<keyword id="KW-0960">Knottin</keyword>
<keyword id="KW-0611">Plant defense</keyword>
<comment type="function">
    <text evidence="4">Probably participates in a plant defense mechanism.</text>
</comment>
<comment type="domain">
    <text evidence="1">The presence of a 'disulfide through disulfide knot' structurally defines this protein as a knottin.</text>
</comment>
<comment type="PTM">
    <text evidence="2 3">This is a cyclic peptide.</text>
</comment>
<comment type="mass spectrometry" mass="3186.9" method="Electrospray" evidence="3"/>
<comment type="similarity">
    <text evidence="2">Belongs to the cyclotide family. Bracelet subfamily.</text>
</comment>
<comment type="caution">
    <text evidence="3">This peptide is cyclic. The start position was chosen by similarity to OAK1 (kalata-B1) for which the DNA sequence is known.</text>
</comment>
<accession>P85134</accession>
<feature type="peptide" id="PRO_0000294963" description="Kalata-B16" evidence="2 3">
    <location>
        <begin position="1"/>
        <end position="30"/>
    </location>
</feature>
<feature type="disulfide bond" evidence="1 2">
    <location>
        <begin position="4"/>
        <end position="21"/>
    </location>
</feature>
<feature type="disulfide bond" evidence="1 2">
    <location>
        <begin position="8"/>
        <end position="23"/>
    </location>
</feature>
<feature type="disulfide bond" evidence="1 2">
    <location>
        <begin position="13"/>
        <end position="28"/>
    </location>
</feature>
<feature type="cross-link" description="Cyclopeptide (Gly-Asp)" evidence="3">
    <location>
        <begin position="1"/>
        <end position="30"/>
    </location>
</feature>
<evidence type="ECO:0000250" key="1">
    <source>
        <dbReference type="UniProtKB" id="P82230"/>
    </source>
</evidence>
<evidence type="ECO:0000255" key="2">
    <source>
        <dbReference type="PROSITE-ProRule" id="PRU00395"/>
    </source>
</evidence>
<evidence type="ECO:0000269" key="3">
    <source>
    </source>
</evidence>
<evidence type="ECO:0000305" key="4"/>
<proteinExistence type="evidence at protein level"/>
<dbReference type="SMR" id="P85134"/>
<dbReference type="GO" id="GO:0006952">
    <property type="term" value="P:defense response"/>
    <property type="evidence" value="ECO:0007669"/>
    <property type="project" value="UniProtKB-KW"/>
</dbReference>
<dbReference type="InterPro" id="IPR005535">
    <property type="entry name" value="Cyclotide"/>
</dbReference>
<dbReference type="InterPro" id="IPR012323">
    <property type="entry name" value="Cyclotide_bracelet_CS"/>
</dbReference>
<dbReference type="InterPro" id="IPR036146">
    <property type="entry name" value="Cyclotide_sf"/>
</dbReference>
<dbReference type="Pfam" id="PF03784">
    <property type="entry name" value="Cyclotide"/>
    <property type="match status" value="1"/>
</dbReference>
<dbReference type="PIRSF" id="PIRSF037891">
    <property type="entry name" value="Cycloviolacin"/>
    <property type="match status" value="1"/>
</dbReference>
<dbReference type="SUPFAM" id="SSF57038">
    <property type="entry name" value="Cyclotides"/>
    <property type="match status" value="1"/>
</dbReference>
<dbReference type="PROSITE" id="PS51052">
    <property type="entry name" value="CYCLOTIDE"/>
    <property type="match status" value="1"/>
</dbReference>
<dbReference type="PROSITE" id="PS60008">
    <property type="entry name" value="CYCLOTIDE_BRACELET"/>
    <property type="match status" value="1"/>
</dbReference>
<reference evidence="4" key="1">
    <citation type="journal article" date="2007" name="ChemBioChem">
        <title>The cyclotide fingerprint in Oldenlandia affinis: elucidation of chemically modified, linear and novel macrocyclic peptides.</title>
        <authorList>
            <person name="Plan M.R.R."/>
            <person name="Goeransson U."/>
            <person name="Clark R.J."/>
            <person name="Daly N.L."/>
            <person name="Colgrave M.L."/>
            <person name="Craik D.J."/>
        </authorList>
    </citation>
    <scope>PROTEIN SEQUENCE</scope>
    <scope>MASS SPECTROMETRY</scope>
</reference>
<protein>
    <recommendedName>
        <fullName>Kalata-B16</fullName>
    </recommendedName>
</protein>